<sequence length="346" mass="38495">MRHGDISSSNDTVGVAVVNYKMPRLHTAAEVLDNARRIADMIVGMKQGLPGMDLVVFPEYSLQGIMYDPAEMMETAVAIPGEETEIFSRACRKANVWGVFSLTGERHEEHPRKAPYNTLVLIDNNGEIVQKYRKIIPWCPIEGWYPGGQTYVSDGPKGMKISLIICDDGNYPEIWRDCAMKGAELIVRCQGYMYPAKDQQVMMAKAMAWANNCYVAVANAAGFDGVYSYFGHSAIIGFDGRTLGECGEEEMGIQYAQLSLSQIRDARANDQSQNHLFKILHRGYSGLQASGDGDRGLAECPFEFYRTWVTDAEKARENVERLTRSTTGVAQCPVGRLPYEGLEKEA</sequence>
<protein>
    <recommendedName>
        <fullName evidence="1">Aliphatic amidase</fullName>
        <ecNumber evidence="1">3.5.1.4</ecNumber>
    </recommendedName>
    <alternativeName>
        <fullName evidence="1">Acylamide amidohydrolase</fullName>
    </alternativeName>
</protein>
<comment type="function">
    <text evidence="1">Catalyzes the hydrolysis of short-chain aliphatic amides to their corresponding organic acids with release of ammonia.</text>
</comment>
<comment type="function">
    <text evidence="1">Also exhibits in vitro acyl transferase activity, transferring the acyl moiety of short-chain amides to hydroxylamine to form hydroxamates.</text>
</comment>
<comment type="catalytic activity">
    <reaction evidence="1">
        <text>a monocarboxylic acid amide + H2O = a monocarboxylate + NH4(+)</text>
        <dbReference type="Rhea" id="RHEA:12020"/>
        <dbReference type="ChEBI" id="CHEBI:15377"/>
        <dbReference type="ChEBI" id="CHEBI:28938"/>
        <dbReference type="ChEBI" id="CHEBI:35757"/>
        <dbReference type="ChEBI" id="CHEBI:83628"/>
        <dbReference type="EC" id="3.5.1.4"/>
    </reaction>
</comment>
<comment type="similarity">
    <text evidence="1">Belongs to the carbon-nitrogen hydrolase superfamily. Aliphatic amidase family.</text>
</comment>
<evidence type="ECO:0000255" key="1">
    <source>
        <dbReference type="HAMAP-Rule" id="MF_01242"/>
    </source>
</evidence>
<evidence type="ECO:0000255" key="2">
    <source>
        <dbReference type="PROSITE-ProRule" id="PRU00054"/>
    </source>
</evidence>
<proteinExistence type="inferred from homology"/>
<dbReference type="EC" id="3.5.1.4" evidence="1"/>
<dbReference type="EMBL" id="CP000744">
    <property type="protein sequence ID" value="ABR82057.1"/>
    <property type="molecule type" value="Genomic_DNA"/>
</dbReference>
<dbReference type="RefSeq" id="WP_012074883.1">
    <property type="nucleotide sequence ID" value="NC_009656.1"/>
</dbReference>
<dbReference type="SMR" id="A6V262"/>
<dbReference type="GeneID" id="77220123"/>
<dbReference type="KEGG" id="pap:PSPA7_1764"/>
<dbReference type="HOGENOM" id="CLU_071797_0_0_6"/>
<dbReference type="Proteomes" id="UP000001582">
    <property type="component" value="Chromosome"/>
</dbReference>
<dbReference type="GO" id="GO:0004040">
    <property type="term" value="F:amidase activity"/>
    <property type="evidence" value="ECO:0007669"/>
    <property type="project" value="UniProtKB-UniRule"/>
</dbReference>
<dbReference type="CDD" id="cd07565">
    <property type="entry name" value="aliphatic_amidase"/>
    <property type="match status" value="1"/>
</dbReference>
<dbReference type="FunFam" id="3.60.110.10:FF:000014">
    <property type="entry name" value="Aliphatic amidase"/>
    <property type="match status" value="1"/>
</dbReference>
<dbReference type="Gene3D" id="3.60.110.10">
    <property type="entry name" value="Carbon-nitrogen hydrolase"/>
    <property type="match status" value="1"/>
</dbReference>
<dbReference type="HAMAP" id="MF_01242">
    <property type="entry name" value="Aliphatic_amidase"/>
    <property type="match status" value="1"/>
</dbReference>
<dbReference type="InterPro" id="IPR050345">
    <property type="entry name" value="Aliph_Amidase/BUP"/>
</dbReference>
<dbReference type="InterPro" id="IPR023719">
    <property type="entry name" value="Aliphatic_amidase"/>
</dbReference>
<dbReference type="InterPro" id="IPR003010">
    <property type="entry name" value="C-N_Hydrolase"/>
</dbReference>
<dbReference type="InterPro" id="IPR036526">
    <property type="entry name" value="C-N_Hydrolase_sf"/>
</dbReference>
<dbReference type="NCBIfam" id="NF009802">
    <property type="entry name" value="PRK13286.1"/>
    <property type="match status" value="1"/>
</dbReference>
<dbReference type="PANTHER" id="PTHR43674:SF14">
    <property type="entry name" value="ALIPHATIC AMIDASE"/>
    <property type="match status" value="1"/>
</dbReference>
<dbReference type="PANTHER" id="PTHR43674">
    <property type="entry name" value="NITRILASE C965.09-RELATED"/>
    <property type="match status" value="1"/>
</dbReference>
<dbReference type="Pfam" id="PF00795">
    <property type="entry name" value="CN_hydrolase"/>
    <property type="match status" value="1"/>
</dbReference>
<dbReference type="SUPFAM" id="SSF56317">
    <property type="entry name" value="Carbon-nitrogen hydrolase"/>
    <property type="match status" value="1"/>
</dbReference>
<dbReference type="PROSITE" id="PS50263">
    <property type="entry name" value="CN_HYDROLASE"/>
    <property type="match status" value="1"/>
</dbReference>
<name>AMIE_PSEP7</name>
<gene>
    <name evidence="1" type="primary">amiE</name>
    <name type="ordered locus">PSPA7_1764</name>
</gene>
<reference key="1">
    <citation type="submission" date="2007-06" db="EMBL/GenBank/DDBJ databases">
        <authorList>
            <person name="Dodson R.J."/>
            <person name="Harkins D."/>
            <person name="Paulsen I.T."/>
        </authorList>
    </citation>
    <scope>NUCLEOTIDE SEQUENCE [LARGE SCALE GENOMIC DNA]</scope>
    <source>
        <strain>DSM 24068 / PA7</strain>
    </source>
</reference>
<feature type="chain" id="PRO_1000067051" description="Aliphatic amidase">
    <location>
        <begin position="1"/>
        <end position="346"/>
    </location>
</feature>
<feature type="domain" description="CN hydrolase" evidence="2">
    <location>
        <begin position="13"/>
        <end position="260"/>
    </location>
</feature>
<feature type="active site" description="Proton acceptor" evidence="1">
    <location>
        <position position="59"/>
    </location>
</feature>
<feature type="active site" description="Proton donor" evidence="1">
    <location>
        <position position="134"/>
    </location>
</feature>
<feature type="active site" description="Nucleophile" evidence="1">
    <location>
        <position position="166"/>
    </location>
</feature>
<accession>A6V262</accession>
<keyword id="KW-0378">Hydrolase</keyword>
<organism>
    <name type="scientific">Pseudomonas paraeruginosa (strain DSM 24068 / PA7)</name>
    <name type="common">Pseudomonas aeruginosa (strain PA7)</name>
    <dbReference type="NCBI Taxonomy" id="381754"/>
    <lineage>
        <taxon>Bacteria</taxon>
        <taxon>Pseudomonadati</taxon>
        <taxon>Pseudomonadota</taxon>
        <taxon>Gammaproteobacteria</taxon>
        <taxon>Pseudomonadales</taxon>
        <taxon>Pseudomonadaceae</taxon>
        <taxon>Pseudomonas</taxon>
        <taxon>Pseudomonas paraeruginosa</taxon>
    </lineage>
</organism>